<comment type="function">
    <text evidence="1">One of two assembly initiator proteins, it binds directly to the 5'-end of the 23S rRNA, where it nucleates assembly of the 50S subunit.</text>
</comment>
<comment type="function">
    <text evidence="1">One of the proteins that surrounds the polypeptide exit tunnel on the outside of the subunit.</text>
</comment>
<comment type="subunit">
    <text evidence="1">Part of the 50S ribosomal subunit.</text>
</comment>
<comment type="similarity">
    <text evidence="1">Belongs to the universal ribosomal protein uL24 family.</text>
</comment>
<evidence type="ECO:0000255" key="1">
    <source>
        <dbReference type="HAMAP-Rule" id="MF_01326"/>
    </source>
</evidence>
<evidence type="ECO:0000305" key="2"/>
<name>RL24_BURM9</name>
<gene>
    <name evidence="1" type="primary">rplX</name>
    <name type="ordered locus">BMA10229_A1935</name>
</gene>
<keyword id="KW-0687">Ribonucleoprotein</keyword>
<keyword id="KW-0689">Ribosomal protein</keyword>
<keyword id="KW-0694">RNA-binding</keyword>
<keyword id="KW-0699">rRNA-binding</keyword>
<feature type="chain" id="PRO_1000052193" description="Large ribosomal subunit protein uL24">
    <location>
        <begin position="1"/>
        <end position="102"/>
    </location>
</feature>
<dbReference type="EMBL" id="CP000546">
    <property type="protein sequence ID" value="ABN02530.1"/>
    <property type="molecule type" value="Genomic_DNA"/>
</dbReference>
<dbReference type="RefSeq" id="WP_004197950.1">
    <property type="nucleotide sequence ID" value="NC_008836.1"/>
</dbReference>
<dbReference type="SMR" id="A2S7I7"/>
<dbReference type="GeneID" id="93061821"/>
<dbReference type="KEGG" id="bml:BMA10229_A1935"/>
<dbReference type="HOGENOM" id="CLU_093315_2_2_4"/>
<dbReference type="Proteomes" id="UP000002283">
    <property type="component" value="Chromosome I"/>
</dbReference>
<dbReference type="GO" id="GO:1990904">
    <property type="term" value="C:ribonucleoprotein complex"/>
    <property type="evidence" value="ECO:0007669"/>
    <property type="project" value="UniProtKB-KW"/>
</dbReference>
<dbReference type="GO" id="GO:0005840">
    <property type="term" value="C:ribosome"/>
    <property type="evidence" value="ECO:0007669"/>
    <property type="project" value="UniProtKB-KW"/>
</dbReference>
<dbReference type="GO" id="GO:0019843">
    <property type="term" value="F:rRNA binding"/>
    <property type="evidence" value="ECO:0007669"/>
    <property type="project" value="UniProtKB-UniRule"/>
</dbReference>
<dbReference type="GO" id="GO:0003735">
    <property type="term" value="F:structural constituent of ribosome"/>
    <property type="evidence" value="ECO:0007669"/>
    <property type="project" value="InterPro"/>
</dbReference>
<dbReference type="GO" id="GO:0006412">
    <property type="term" value="P:translation"/>
    <property type="evidence" value="ECO:0007669"/>
    <property type="project" value="UniProtKB-UniRule"/>
</dbReference>
<dbReference type="CDD" id="cd06089">
    <property type="entry name" value="KOW_RPL26"/>
    <property type="match status" value="1"/>
</dbReference>
<dbReference type="Gene3D" id="2.30.30.30">
    <property type="match status" value="1"/>
</dbReference>
<dbReference type="HAMAP" id="MF_01326_B">
    <property type="entry name" value="Ribosomal_uL24_B"/>
    <property type="match status" value="1"/>
</dbReference>
<dbReference type="InterPro" id="IPR005824">
    <property type="entry name" value="KOW"/>
</dbReference>
<dbReference type="InterPro" id="IPR014722">
    <property type="entry name" value="Rib_uL2_dom2"/>
</dbReference>
<dbReference type="InterPro" id="IPR003256">
    <property type="entry name" value="Ribosomal_uL24"/>
</dbReference>
<dbReference type="InterPro" id="IPR005825">
    <property type="entry name" value="Ribosomal_uL24_CS"/>
</dbReference>
<dbReference type="InterPro" id="IPR041988">
    <property type="entry name" value="Ribosomal_uL24_KOW"/>
</dbReference>
<dbReference type="InterPro" id="IPR008991">
    <property type="entry name" value="Translation_prot_SH3-like_sf"/>
</dbReference>
<dbReference type="NCBIfam" id="TIGR01079">
    <property type="entry name" value="rplX_bact"/>
    <property type="match status" value="1"/>
</dbReference>
<dbReference type="PANTHER" id="PTHR12903">
    <property type="entry name" value="MITOCHONDRIAL RIBOSOMAL PROTEIN L24"/>
    <property type="match status" value="1"/>
</dbReference>
<dbReference type="Pfam" id="PF00467">
    <property type="entry name" value="KOW"/>
    <property type="match status" value="1"/>
</dbReference>
<dbReference type="Pfam" id="PF17136">
    <property type="entry name" value="ribosomal_L24"/>
    <property type="match status" value="1"/>
</dbReference>
<dbReference type="SUPFAM" id="SSF50104">
    <property type="entry name" value="Translation proteins SH3-like domain"/>
    <property type="match status" value="1"/>
</dbReference>
<dbReference type="PROSITE" id="PS01108">
    <property type="entry name" value="RIBOSOMAL_L24"/>
    <property type="match status" value="1"/>
</dbReference>
<accession>A2S7I7</accession>
<protein>
    <recommendedName>
        <fullName evidence="1">Large ribosomal subunit protein uL24</fullName>
    </recommendedName>
    <alternativeName>
        <fullName evidence="2">50S ribosomal protein L24</fullName>
    </alternativeName>
</protein>
<sequence length="102" mass="10709">MNKIRKGDEVIVITGKDKGKRGVVLAVGAEHVTVEGINLVKKHVKPNPMKGTTGGVEAKTMPLHISNVALVDANGKASRVGIKVEDGKKVRFLKTTGAVLSA</sequence>
<reference key="1">
    <citation type="journal article" date="2010" name="Genome Biol. Evol.">
        <title>Continuing evolution of Burkholderia mallei through genome reduction and large-scale rearrangements.</title>
        <authorList>
            <person name="Losada L."/>
            <person name="Ronning C.M."/>
            <person name="DeShazer D."/>
            <person name="Woods D."/>
            <person name="Fedorova N."/>
            <person name="Kim H.S."/>
            <person name="Shabalina S.A."/>
            <person name="Pearson T.R."/>
            <person name="Brinkac L."/>
            <person name="Tan P."/>
            <person name="Nandi T."/>
            <person name="Crabtree J."/>
            <person name="Badger J."/>
            <person name="Beckstrom-Sternberg S."/>
            <person name="Saqib M."/>
            <person name="Schutzer S.E."/>
            <person name="Keim P."/>
            <person name="Nierman W.C."/>
        </authorList>
    </citation>
    <scope>NUCLEOTIDE SEQUENCE [LARGE SCALE GENOMIC DNA]</scope>
    <source>
        <strain>NCTC 10229</strain>
    </source>
</reference>
<proteinExistence type="inferred from homology"/>
<organism>
    <name type="scientific">Burkholderia mallei (strain NCTC 10229)</name>
    <dbReference type="NCBI Taxonomy" id="412022"/>
    <lineage>
        <taxon>Bacteria</taxon>
        <taxon>Pseudomonadati</taxon>
        <taxon>Pseudomonadota</taxon>
        <taxon>Betaproteobacteria</taxon>
        <taxon>Burkholderiales</taxon>
        <taxon>Burkholderiaceae</taxon>
        <taxon>Burkholderia</taxon>
        <taxon>pseudomallei group</taxon>
    </lineage>
</organism>